<gene>
    <name evidence="4" type="primary">algE3</name>
</gene>
<evidence type="ECO:0000250" key="1">
    <source>
        <dbReference type="UniProtKB" id="Q44494"/>
    </source>
</evidence>
<evidence type="ECO:0000255" key="2"/>
<evidence type="ECO:0000256" key="3">
    <source>
        <dbReference type="SAM" id="MobiDB-lite"/>
    </source>
</evidence>
<evidence type="ECO:0000303" key="4">
    <source>
    </source>
</evidence>
<evidence type="ECO:0000305" key="5"/>
<protein>
    <recommendedName>
        <fullName evidence="5">Mannuronan C5-epimerase AlgE3</fullName>
        <ecNumber evidence="1">5.1.3.37</ecNumber>
    </recommendedName>
    <alternativeName>
        <fullName>Poly(beta-D-mannuronate) C5 epimerase 3</fullName>
    </alternativeName>
</protein>
<sequence length="1839" mass="191005">MDFNVKDFGALGDGASDDTAAIQAAIDAAHAAGGGTVYLPAGEYRVSGGEEPSDGALTIKSNVYIVGAGMGETVIKMVDGWTQNVTGMVRSAYGEETSNFGMSDLTLDGNRDNLSAKVDGWFNGYIPGQDGADRDVTLERVEIREMSGYGFDPHEQTINLTIRDSVAHDNGLDGFVADYQVGGVFENNVSYNNDRHGFNIVTSTNDFVLSNNVAYGNGGAGLVVQRGSYDLPHPYDILIDGGAYYDNALEGVQLKMTHDVTLQNAEIYGNGLYGVRVYGAQDVQLLDNQIHDNSQNGAYAEVLLQSYDDTAGVSGNFYVTTGTWLEGNVISGSANSTFGIQERADGTDYSSLYANTIDGVQNGTVRLYGANSTVSEQPSSGQQATLEGTAGNDVLSGTGAHELILGLAGNDRLDGGAGDDTLDGGAGRDTLTGGAGADTFRFSAREDSHRTDSASFTDLITDFDASQDRIDLSALGFTGLGNGYDGTLAVTTGSGGTRTYLKSYEVDAQGRRFEIALDGNFVGQFNDGNLLFDAAPVTGTEGNDNLSGTDAGETLLGYGGNDTLNGGAGNDILVGGAGRDTLTGGAGADVFRFEALSDSQRNYTAGDNQGDYIIDFAVGEDRIDVSALGYTGLGNGRNGTLAVVLNSAGDRTYVKSYDTDANGYNFELSLAGNYQGLLGAEQFVFATPPEQATIEGTDGNDSLQGTGADELLLGLGGRDSLNGGAGDDVLDGGAERDTLTGGTGADTFLFSARTDSYRTDSASFTDLITDFDPAQDRIDLSGLGFSGFGNGYDGTLLLQVNAAGTRTYLKSLEADADGQRFEIALDGDFSGQLDSGNVIFEAGVFNAKDFGALGDGASDDRPAIQAAIDAAYAAGGGTVYLPAGEYRVSPTGDPGDGCLMLKDGVYLVGAGMGETVIKLIDGSDQKITGMVRSAYGEETSNFGMSDLTLDGNRDNTSGKVDGWFNGYIPGQDGADRNVTLERVEIREMSGYGFDPHEQTINLTIRDSVAHDNGLDGFVADYLVDSVFENNVAYNNDRHGFNVVTSTYDFTLSNNVAYGNGGAGLVIQRGAEDLAQPTDILIDGGAYYDNALEGVLLKMTNNITLQNAEIYGNGYSGVRLYGTEDVQILNNQIHDNAQNVAYAEVLLQSFNDVGVSGNFYATTGTWIEGNVISGSANSTYGIEERNDGTDYSSLYANTIDGVQTGAVRLNGAHSIVSDQPGTGQQATLEGTTGNDTLGGSDAHETLLGLDGDDRLDGGAGNDILDGGVGRDTLTGGAGADTFRFSAREDSYRTASTSFTDLITDFDPAQDRIDLSALGFTGLGDGYDGTLLVTTGSGGSRTYLKSLEADAEGRRFEIALDGDFVGLLDASNLIFERPAIEGDAGDNALLGTSVAETLLGHAGNDTLDGAGGDDILVGGAGSDSLTGGAGADVFRFDALSDSQRNYDTGDNQGDRITDFAVGEDKLDVSALGFTGLGDGYNGTLVLVLNSAGDRTYVKSYENGADGYRFEFSLDGNYQGLLGNEDFIFATPSGQQLLEGTAGNDSLQGTAADEVIHGGSGRDTLAGGAGADVFRFSELTDSYRTDSASYADLITDFDASEDRIDLSGLGFSGLGNGYGGTLALQVNSAGTRTYLKSYEANAAGERFELSLDGDLSGLDESHLVFDERVVLAGGDGNDTLSGGSAAEELLGGAGNDSLSGGAGNDILDGGAGRDTLSGGSGSDIFRFGDALDSFRNYNSGANVTDSIADFTHGADLIDLSALGYTGLGDGYNGTLAIVLNDAGTKTYLKDRGGDAEGNRFEIALEGNHADQLDASDFIFATAAAATGIEVVGSTPAEEQPVV</sequence>
<keyword id="KW-0016">Alginate biosynthesis</keyword>
<keyword id="KW-0106">Calcium</keyword>
<keyword id="KW-0413">Isomerase</keyword>
<keyword id="KW-0677">Repeat</keyword>
<keyword id="KW-0964">Secreted</keyword>
<feature type="chain" id="PRO_0000219557" description="Mannuronan C5-epimerase AlgE3">
    <location>
        <begin position="1"/>
        <end position="1839"/>
    </location>
</feature>
<feature type="repeat" description="PbH1 1" evidence="2">
    <location>
        <begin position="133"/>
        <end position="155"/>
    </location>
</feature>
<feature type="repeat" description="PbH1 2" evidence="2">
    <location>
        <begin position="157"/>
        <end position="179"/>
    </location>
</feature>
<feature type="repeat" description="PbH1 3" evidence="2">
    <location>
        <begin position="180"/>
        <end position="202"/>
    </location>
</feature>
<feature type="repeat" description="PbH1 4" evidence="2">
    <location>
        <begin position="204"/>
        <end position="226"/>
    </location>
</feature>
<feature type="repeat" description="PbH1 5" evidence="2">
    <location>
        <begin position="257"/>
        <end position="279"/>
    </location>
</feature>
<feature type="repeat" description="PbH1 6" evidence="2">
    <location>
        <begin position="280"/>
        <end position="302"/>
    </location>
</feature>
<feature type="repeat" description="PbH1 7" evidence="2">
    <location>
        <begin position="320"/>
        <end position="342"/>
    </location>
</feature>
<feature type="repeat" description="PbH1 8" evidence="2">
    <location>
        <begin position="347"/>
        <end position="369"/>
    </location>
</feature>
<feature type="repeat" description="Hemolysin-type calcium-binding 1" evidence="2">
    <location>
        <begin position="387"/>
        <end position="399"/>
    </location>
</feature>
<feature type="repeat" description="Hemolysin-type calcium-binding 2" evidence="2">
    <location>
        <begin position="406"/>
        <end position="422"/>
    </location>
</feature>
<feature type="repeat" description="Hemolysin-type calcium-binding 3" evidence="2">
    <location>
        <begin position="424"/>
        <end position="440"/>
    </location>
</feature>
<feature type="repeat" description="Hemolysin-type calcium-binding 4" evidence="2">
    <location>
        <begin position="538"/>
        <end position="550"/>
    </location>
</feature>
<feature type="repeat" description="Hemolysin-type calcium-binding 5" evidence="2">
    <location>
        <begin position="557"/>
        <end position="573"/>
    </location>
</feature>
<feature type="repeat" description="Hemolysin-type calcium-binding 6" evidence="2">
    <location>
        <begin position="574"/>
        <end position="591"/>
    </location>
</feature>
<feature type="repeat" description="Hemolysin-type calcium-binding 7" evidence="2">
    <location>
        <begin position="695"/>
        <end position="709"/>
    </location>
</feature>
<feature type="repeat" description="Hemolysin-type calcium-binding 8" evidence="2">
    <location>
        <begin position="714"/>
        <end position="730"/>
    </location>
</feature>
<feature type="repeat" description="Hemolysin-type calcium-binding 9" evidence="2">
    <location>
        <begin position="732"/>
        <end position="748"/>
    </location>
</feature>
<feature type="repeat" description="PbH1 9" evidence="2">
    <location>
        <begin position="975"/>
        <end position="997"/>
    </location>
</feature>
<feature type="repeat" description="PbH1 10" evidence="2">
    <location>
        <begin position="999"/>
        <end position="1021"/>
    </location>
</feature>
<feature type="repeat" description="PbH1 11" evidence="2">
    <location>
        <begin position="1022"/>
        <end position="1044"/>
    </location>
</feature>
<feature type="repeat" description="PbH1 12" evidence="2">
    <location>
        <begin position="1046"/>
        <end position="1068"/>
    </location>
</feature>
<feature type="repeat" description="PbH1 13" evidence="2">
    <location>
        <begin position="1099"/>
        <end position="1121"/>
    </location>
</feature>
<feature type="repeat" description="PbH1 14" evidence="2">
    <location>
        <begin position="1122"/>
        <end position="1143"/>
    </location>
</feature>
<feature type="repeat" description="PbH1 15" evidence="2">
    <location>
        <begin position="1161"/>
        <end position="1183"/>
    </location>
</feature>
<feature type="repeat" description="PbH1 16" evidence="2">
    <location>
        <begin position="1188"/>
        <end position="1210"/>
    </location>
</feature>
<feature type="repeat" description="Hemolysin-type calcium-binding 10" evidence="2">
    <location>
        <begin position="1229"/>
        <end position="1243"/>
    </location>
</feature>
<feature type="repeat" description="Hemolysin-type calcium-binding 11" evidence="2">
    <location>
        <begin position="1247"/>
        <end position="1263"/>
    </location>
</feature>
<feature type="repeat" description="Hemolysin-type calcium-binding 12" evidence="2">
    <location>
        <begin position="1265"/>
        <end position="1281"/>
    </location>
</feature>
<feature type="repeat" description="Hemolysin-type calcium-binding 13" evidence="2">
    <location>
        <begin position="1398"/>
        <end position="1414"/>
    </location>
</feature>
<feature type="repeat" description="Hemolysin-type calcium-binding 14" evidence="2">
    <location>
        <begin position="1415"/>
        <end position="1432"/>
    </location>
</feature>
<feature type="repeat" description="Hemolysin-type calcium-binding 15" evidence="2">
    <location>
        <begin position="1536"/>
        <end position="1552"/>
    </location>
</feature>
<feature type="repeat" description="Hemolysin-type calcium-binding 16" evidence="2">
    <location>
        <begin position="1554"/>
        <end position="1571"/>
    </location>
</feature>
<feature type="repeat" description="Hemolysin-type calcium-binding 17" evidence="2">
    <location>
        <begin position="1670"/>
        <end position="1681"/>
    </location>
</feature>
<feature type="repeat" description="Hemolysin-type calcium-binding 18" evidence="2">
    <location>
        <begin position="1688"/>
        <end position="1704"/>
    </location>
</feature>
<feature type="repeat" description="Hemolysin-type calcium-binding 19" evidence="2">
    <location>
        <begin position="1706"/>
        <end position="1722"/>
    </location>
</feature>
<feature type="region of interest" description="Disordered" evidence="3">
    <location>
        <begin position="372"/>
        <end position="392"/>
    </location>
</feature>
<feature type="region of interest" description="Disordered" evidence="3">
    <location>
        <begin position="1215"/>
        <end position="1238"/>
    </location>
</feature>
<feature type="compositionally biased region" description="Polar residues" evidence="3">
    <location>
        <begin position="372"/>
        <end position="386"/>
    </location>
</feature>
<feature type="compositionally biased region" description="Polar residues" evidence="3">
    <location>
        <begin position="1215"/>
        <end position="1236"/>
    </location>
</feature>
<organism>
    <name type="scientific">Azotobacter vinelandii</name>
    <dbReference type="NCBI Taxonomy" id="354"/>
    <lineage>
        <taxon>Bacteria</taxon>
        <taxon>Pseudomonadati</taxon>
        <taxon>Pseudomonadota</taxon>
        <taxon>Gammaproteobacteria</taxon>
        <taxon>Pseudomonadales</taxon>
        <taxon>Pseudomonadaceae</taxon>
        <taxon>Azotobacter</taxon>
    </lineage>
</organism>
<proteinExistence type="inferred from homology"/>
<reference key="1">
    <citation type="journal article" date="1995" name="Mol. Microbiol.">
        <title>A family of modular type mannuronan C-5-epimerase genes controls alginate structure in Azotobacter vinelandii.</title>
        <authorList>
            <person name="Ertesvaag H."/>
            <person name="Hoeidal H.K."/>
            <person name="Hals I.K."/>
            <person name="Rian A."/>
            <person name="Doseth B."/>
            <person name="Valla S."/>
        </authorList>
    </citation>
    <scope>NUCLEOTIDE SEQUENCE [GENOMIC DNA]</scope>
    <source>
        <strain>E</strain>
    </source>
</reference>
<reference key="2">
    <citation type="journal article" date="1999" name="Metab. Eng.">
        <title>Mannuronan C-5-epimerases and their application for in vitro and in vivo design of new alginates useful in biotechnology.</title>
        <authorList>
            <person name="Ertesvaag H."/>
            <person name="Hoeidal H.K."/>
            <person name="Schjerven H."/>
            <person name="Glaerum Svanem B.I."/>
            <person name="Valla S."/>
        </authorList>
    </citation>
    <scope>REVIEW</scope>
</reference>
<dbReference type="EC" id="5.1.3.37" evidence="1"/>
<dbReference type="EMBL" id="L39096">
    <property type="protein sequence ID" value="AAA87313.1"/>
    <property type="molecule type" value="Genomic_DNA"/>
</dbReference>
<dbReference type="PIR" id="S77626">
    <property type="entry name" value="S77626"/>
</dbReference>
<dbReference type="SMR" id="Q44496"/>
<dbReference type="BRENDA" id="5.1.3.37">
    <property type="organism ID" value="49"/>
</dbReference>
<dbReference type="UniPathway" id="UPA00286"/>
<dbReference type="GO" id="GO:0005615">
    <property type="term" value="C:extracellular space"/>
    <property type="evidence" value="ECO:0007669"/>
    <property type="project" value="InterPro"/>
</dbReference>
<dbReference type="GO" id="GO:0005509">
    <property type="term" value="F:calcium ion binding"/>
    <property type="evidence" value="ECO:0007669"/>
    <property type="project" value="InterPro"/>
</dbReference>
<dbReference type="GO" id="GO:0016853">
    <property type="term" value="F:isomerase activity"/>
    <property type="evidence" value="ECO:0007669"/>
    <property type="project" value="UniProtKB-KW"/>
</dbReference>
<dbReference type="GO" id="GO:0042121">
    <property type="term" value="P:alginic acid biosynthetic process"/>
    <property type="evidence" value="ECO:0007669"/>
    <property type="project" value="UniProtKB-UniPathway"/>
</dbReference>
<dbReference type="Gene3D" id="2.150.10.10">
    <property type="entry name" value="Serralysin-like metalloprotease, C-terminal"/>
    <property type="match status" value="6"/>
</dbReference>
<dbReference type="Gene3D" id="2.160.20.10">
    <property type="entry name" value="Single-stranded right-handed beta-helix, Pectin lyase-like"/>
    <property type="match status" value="2"/>
</dbReference>
<dbReference type="InterPro" id="IPR039448">
    <property type="entry name" value="Beta_helix"/>
</dbReference>
<dbReference type="InterPro" id="IPR006633">
    <property type="entry name" value="Carb-bd_sugar_hydrolysis-dom"/>
</dbReference>
<dbReference type="InterPro" id="IPR018511">
    <property type="entry name" value="Hemolysin-typ_Ca-bd_CS"/>
</dbReference>
<dbReference type="InterPro" id="IPR001343">
    <property type="entry name" value="Hemolysn_Ca-bd"/>
</dbReference>
<dbReference type="InterPro" id="IPR006626">
    <property type="entry name" value="PbH1"/>
</dbReference>
<dbReference type="InterPro" id="IPR012334">
    <property type="entry name" value="Pectin_lyas_fold"/>
</dbReference>
<dbReference type="InterPro" id="IPR011050">
    <property type="entry name" value="Pectin_lyase_fold/virulence"/>
</dbReference>
<dbReference type="InterPro" id="IPR013858">
    <property type="entry name" value="Peptidase_M10B_C"/>
</dbReference>
<dbReference type="InterPro" id="IPR024535">
    <property type="entry name" value="RHGA/B-epi-like_pectate_lyase"/>
</dbReference>
<dbReference type="InterPro" id="IPR050557">
    <property type="entry name" value="RTX_toxin/Mannuronan_C5-epim"/>
</dbReference>
<dbReference type="InterPro" id="IPR011049">
    <property type="entry name" value="Serralysin-like_metalloprot_C"/>
</dbReference>
<dbReference type="PANTHER" id="PTHR38340">
    <property type="entry name" value="S-LAYER PROTEIN"/>
    <property type="match status" value="1"/>
</dbReference>
<dbReference type="PANTHER" id="PTHR38340:SF1">
    <property type="entry name" value="S-LAYER PROTEIN"/>
    <property type="match status" value="1"/>
</dbReference>
<dbReference type="Pfam" id="PF13229">
    <property type="entry name" value="Beta_helix"/>
    <property type="match status" value="2"/>
</dbReference>
<dbReference type="Pfam" id="PF00353">
    <property type="entry name" value="HemolysinCabind"/>
    <property type="match status" value="7"/>
</dbReference>
<dbReference type="Pfam" id="PF12708">
    <property type="entry name" value="Pect-lyase_RHGA_epim"/>
    <property type="match status" value="2"/>
</dbReference>
<dbReference type="Pfam" id="PF08548">
    <property type="entry name" value="Peptidase_M10_C"/>
    <property type="match status" value="7"/>
</dbReference>
<dbReference type="PRINTS" id="PR00313">
    <property type="entry name" value="CABNDNGRPT"/>
</dbReference>
<dbReference type="SMART" id="SM00722">
    <property type="entry name" value="CASH"/>
    <property type="match status" value="4"/>
</dbReference>
<dbReference type="SMART" id="SM00710">
    <property type="entry name" value="PbH1"/>
    <property type="match status" value="16"/>
</dbReference>
<dbReference type="SUPFAM" id="SSF51120">
    <property type="entry name" value="beta-Roll"/>
    <property type="match status" value="7"/>
</dbReference>
<dbReference type="SUPFAM" id="SSF51126">
    <property type="entry name" value="Pectin lyase-like"/>
    <property type="match status" value="2"/>
</dbReference>
<dbReference type="PROSITE" id="PS00330">
    <property type="entry name" value="HEMOLYSIN_CALCIUM"/>
    <property type="match status" value="11"/>
</dbReference>
<accession>Q44496</accession>
<comment type="function">
    <text evidence="1">Converts beta-D-mannuronic acid (M) to alpha-L-guluronic acid (G), producing a polymer with gel-forming capacity, required for the formation of the cyst coat.</text>
</comment>
<comment type="catalytic activity">
    <reaction evidence="1">
        <text>[(1-&gt;4)-beta-D-mannuronosyl](n) = [alginate](n)</text>
        <dbReference type="Rhea" id="RHEA:45572"/>
        <dbReference type="Rhea" id="RHEA-COMP:11264"/>
        <dbReference type="Rhea" id="RHEA-COMP:11270"/>
        <dbReference type="ChEBI" id="CHEBI:58187"/>
        <dbReference type="ChEBI" id="CHEBI:85311"/>
        <dbReference type="EC" id="5.1.3.37"/>
    </reaction>
</comment>
<comment type="cofactor">
    <cofactor evidence="1">
        <name>Ca(2+)</name>
        <dbReference type="ChEBI" id="CHEBI:29108"/>
    </cofactor>
</comment>
<comment type="activity regulation">
    <text evidence="1">Inhibited by zinc.</text>
</comment>
<comment type="pathway">
    <text evidence="1">Glycan biosynthesis; alginate biosynthesis.</text>
</comment>
<comment type="subcellular location">
    <subcellularLocation>
        <location>Secreted</location>
    </subcellularLocation>
    <text>Probably exported via the hemolysin-type secretion pathway.</text>
</comment>
<comment type="domain">
    <text>Composed of two catalytically active A modules and four R modules. The N-terminal A domain introduces a mixture of MG-blocks and G-blocks, whereas the C-terminal A domain only generates MG-blocks.</text>
</comment>
<comment type="miscellaneous">
    <text>Each enzyme of this family of C5 epimerases introduces its own characteristic sequence distribution of G-blocks in their substrates, explaining the extensive sequence variability of alginates. These alginates of varying composition have different physical properties and are necessary at different stages of the bacterium life cycle.</text>
</comment>
<comment type="similarity">
    <text evidence="5">Belongs to the D-mannuronate C5-epimerase family.</text>
</comment>
<name>ALGE3_AZOVI</name>